<accession>Q7WTB3</accession>
<name>BGAM_LACHE</name>
<protein>
    <recommendedName>
        <fullName evidence="5">Beta-galactosidase small subunit</fullName>
        <shortName evidence="5">Beta-gal small subunit</shortName>
        <ecNumber evidence="1">3.2.1.23</ecNumber>
    </recommendedName>
</protein>
<organism>
    <name type="scientific">Lactobacillus helveticus</name>
    <name type="common">Lactobacillus suntoryeus</name>
    <dbReference type="NCBI Taxonomy" id="1587"/>
    <lineage>
        <taxon>Bacteria</taxon>
        <taxon>Bacillati</taxon>
        <taxon>Bacillota</taxon>
        <taxon>Bacilli</taxon>
        <taxon>Lactobacillales</taxon>
        <taxon>Lactobacillaceae</taxon>
        <taxon>Lactobacillus</taxon>
    </lineage>
</organism>
<comment type="function">
    <text evidence="1">Component of a beta-galactosidase.</text>
</comment>
<comment type="catalytic activity">
    <reaction evidence="1">
        <text>Hydrolysis of terminal non-reducing beta-D-galactose residues in beta-D-galactosides.</text>
        <dbReference type="EC" id="3.2.1.23"/>
    </reaction>
</comment>
<comment type="subunit">
    <text evidence="1">Heterodimer of a large (LacL) and a small subunit (LacM).</text>
</comment>
<comment type="induction">
    <text evidence="2">By lactose. Part of an operon consisting of lacL, lacM, and galE.</text>
</comment>
<comment type="similarity">
    <text evidence="4">Belongs to the bacterial beta-galactosidase small subunit family.</text>
</comment>
<proteinExistence type="evidence at transcript level"/>
<reference key="1">
    <citation type="journal article" date="2003" name="Appl. Environ. Microbiol.">
        <title>Unusual organization for lactose and galactose gene clusters in Lactobacillus helveticus.</title>
        <authorList>
            <person name="Fortina M.G."/>
            <person name="Ricci G."/>
            <person name="Mora D."/>
            <person name="Guglielmetti S."/>
            <person name="Manachini P.L."/>
        </authorList>
    </citation>
    <scope>NUCLEOTIDE SEQUENCE [GENOMIC DNA]</scope>
    <scope>TRANSCRIPTIONAL REGULATION</scope>
    <source>
        <strain>ATCC 15009 / DSM 20075 / BCRC 12936 / JCM 1120 / NBRC 15019 / NCIMB 11971 / NRRL B-4526 / Lh12</strain>
    </source>
</reference>
<feature type="chain" id="PRO_0000057668" description="Beta-galactosidase small subunit">
    <location>
        <begin position="1"/>
        <end position="318"/>
    </location>
</feature>
<dbReference type="EC" id="3.2.1.23" evidence="1"/>
<dbReference type="EMBL" id="AJ512877">
    <property type="protein sequence ID" value="CAD55500.1"/>
    <property type="molecule type" value="Genomic_DNA"/>
</dbReference>
<dbReference type="RefSeq" id="WP_003627057.1">
    <property type="nucleotide sequence ID" value="NZ_SCLV01000128.1"/>
</dbReference>
<dbReference type="SMR" id="Q7WTB3"/>
<dbReference type="eggNOG" id="COG3250">
    <property type="taxonomic scope" value="Bacteria"/>
</dbReference>
<dbReference type="GO" id="GO:0009341">
    <property type="term" value="C:beta-galactosidase complex"/>
    <property type="evidence" value="ECO:0007669"/>
    <property type="project" value="InterPro"/>
</dbReference>
<dbReference type="GO" id="GO:0004565">
    <property type="term" value="F:beta-galactosidase activity"/>
    <property type="evidence" value="ECO:0007669"/>
    <property type="project" value="UniProtKB-EC"/>
</dbReference>
<dbReference type="GO" id="GO:0030246">
    <property type="term" value="F:carbohydrate binding"/>
    <property type="evidence" value="ECO:0007669"/>
    <property type="project" value="InterPro"/>
</dbReference>
<dbReference type="GO" id="GO:0005990">
    <property type="term" value="P:lactose catabolic process"/>
    <property type="evidence" value="ECO:0007669"/>
    <property type="project" value="TreeGrafter"/>
</dbReference>
<dbReference type="Gene3D" id="2.70.98.10">
    <property type="match status" value="1"/>
</dbReference>
<dbReference type="InterPro" id="IPR004199">
    <property type="entry name" value="B-gal_small/dom_5"/>
</dbReference>
<dbReference type="InterPro" id="IPR050347">
    <property type="entry name" value="Bact_Beta-galactosidase"/>
</dbReference>
<dbReference type="InterPro" id="IPR011013">
    <property type="entry name" value="Gal_mutarotase_sf_dom"/>
</dbReference>
<dbReference type="InterPro" id="IPR014718">
    <property type="entry name" value="GH-type_carb-bd"/>
</dbReference>
<dbReference type="PANTHER" id="PTHR46323">
    <property type="entry name" value="BETA-GALACTOSIDASE"/>
    <property type="match status" value="1"/>
</dbReference>
<dbReference type="PANTHER" id="PTHR46323:SF2">
    <property type="entry name" value="BETA-GALACTOSIDASE"/>
    <property type="match status" value="1"/>
</dbReference>
<dbReference type="Pfam" id="PF02929">
    <property type="entry name" value="Bgal_small_N"/>
    <property type="match status" value="1"/>
</dbReference>
<dbReference type="SMART" id="SM01038">
    <property type="entry name" value="Bgal_small_N"/>
    <property type="match status" value="1"/>
</dbReference>
<dbReference type="SUPFAM" id="SSF74650">
    <property type="entry name" value="Galactose mutarotase-like"/>
    <property type="match status" value="1"/>
</dbReference>
<evidence type="ECO:0000250" key="1">
    <source>
        <dbReference type="UniProtKB" id="Q02604"/>
    </source>
</evidence>
<evidence type="ECO:0000269" key="2">
    <source>
    </source>
</evidence>
<evidence type="ECO:0000303" key="3">
    <source>
    </source>
</evidence>
<evidence type="ECO:0000305" key="4"/>
<evidence type="ECO:0000305" key="5">
    <source>
    </source>
</evidence>
<gene>
    <name evidence="3" type="primary">lacM</name>
</gene>
<sequence>MDYTNNQLHIIYGDATLGVNGKDFQYIFSYERGGLESLKVHGKEWLYRVPTPTFWRATTDNDRGSGFNLKAAQWLGADMFTKCTDIHLKVDRHDFAELPIAPFNNKFSNHEYAKSAEISFTYQTLTTPATNAKIIYNIDDVGHIKVTMRYYGKKGLPPLPVIGIRLIMPTAATGFDYEGLSGETYPDRMAGAKEGKFHIDGLPVTEYLVPQENGMHMQTKKLTINRETTQNNVDRTNEKFSLSIQQAEKPFNFSCLPYTAEELENATHIEELPLVRRTVLVIAGAVRGVGGIDSWGTDVESAYHINPELDHEFSFILN</sequence>
<keyword id="KW-0326">Glycosidase</keyword>
<keyword id="KW-0378">Hydrolase</keyword>